<sequence length="339" mass="36362">MNQRNASMTVIGAGSYGTALAITLARNGHEVVLWGHDPEHIATLERDRCNAAFLPDVPFPDTLHLESDLATALAASRNILVVVPSHVFGEVLRQIKPLMRPDARLVWATKGLEAETGRLLQDVAREALGDQIPLAVISGPTFAKELAAGLPTAISLASTDQTFADDLQQLLHCGKSFRVYSNPDFIGVQLGGAVKNVIAIGAGMSDGIGFGANARTALITRGLAEMSRLGAALGADPATFMGMAGLGDLVLTCTDNQSRNRRFGMMLGQGMDVQSAQEKIGQVVEGYRNTKEVRELAHRFGVEMPITEEIYQVLYCGKNAREAALTLLGRARKDERSSH</sequence>
<gene>
    <name evidence="1" type="primary">gpsA</name>
    <name type="ordered locus">ECSE_3890</name>
</gene>
<keyword id="KW-0963">Cytoplasm</keyword>
<keyword id="KW-0444">Lipid biosynthesis</keyword>
<keyword id="KW-0443">Lipid metabolism</keyword>
<keyword id="KW-0520">NAD</keyword>
<keyword id="KW-0521">NADP</keyword>
<keyword id="KW-0547">Nucleotide-binding</keyword>
<keyword id="KW-0560">Oxidoreductase</keyword>
<keyword id="KW-0594">Phospholipid biosynthesis</keyword>
<keyword id="KW-1208">Phospholipid metabolism</keyword>
<organism>
    <name type="scientific">Escherichia coli (strain SE11)</name>
    <dbReference type="NCBI Taxonomy" id="409438"/>
    <lineage>
        <taxon>Bacteria</taxon>
        <taxon>Pseudomonadati</taxon>
        <taxon>Pseudomonadota</taxon>
        <taxon>Gammaproteobacteria</taxon>
        <taxon>Enterobacterales</taxon>
        <taxon>Enterobacteriaceae</taxon>
        <taxon>Escherichia</taxon>
    </lineage>
</organism>
<proteinExistence type="inferred from homology"/>
<comment type="function">
    <text evidence="1">Catalyzes the reduction of the glycolytic intermediate dihydroxyacetone phosphate (DHAP) to sn-glycerol 3-phosphate (G3P), the key precursor for phospholipid synthesis.</text>
</comment>
<comment type="catalytic activity">
    <reaction evidence="1">
        <text>sn-glycerol 3-phosphate + NAD(+) = dihydroxyacetone phosphate + NADH + H(+)</text>
        <dbReference type="Rhea" id="RHEA:11092"/>
        <dbReference type="ChEBI" id="CHEBI:15378"/>
        <dbReference type="ChEBI" id="CHEBI:57540"/>
        <dbReference type="ChEBI" id="CHEBI:57597"/>
        <dbReference type="ChEBI" id="CHEBI:57642"/>
        <dbReference type="ChEBI" id="CHEBI:57945"/>
        <dbReference type="EC" id="1.1.1.94"/>
    </reaction>
    <physiologicalReaction direction="right-to-left" evidence="1">
        <dbReference type="Rhea" id="RHEA:11094"/>
    </physiologicalReaction>
</comment>
<comment type="catalytic activity">
    <reaction evidence="1">
        <text>sn-glycerol 3-phosphate + NADP(+) = dihydroxyacetone phosphate + NADPH + H(+)</text>
        <dbReference type="Rhea" id="RHEA:11096"/>
        <dbReference type="ChEBI" id="CHEBI:15378"/>
        <dbReference type="ChEBI" id="CHEBI:57597"/>
        <dbReference type="ChEBI" id="CHEBI:57642"/>
        <dbReference type="ChEBI" id="CHEBI:57783"/>
        <dbReference type="ChEBI" id="CHEBI:58349"/>
        <dbReference type="EC" id="1.1.1.94"/>
    </reaction>
    <physiologicalReaction direction="right-to-left" evidence="1">
        <dbReference type="Rhea" id="RHEA:11098"/>
    </physiologicalReaction>
</comment>
<comment type="pathway">
    <text evidence="1">Membrane lipid metabolism; glycerophospholipid metabolism.</text>
</comment>
<comment type="subcellular location">
    <subcellularLocation>
        <location evidence="1">Cytoplasm</location>
    </subcellularLocation>
</comment>
<comment type="similarity">
    <text evidence="1">Belongs to the NAD-dependent glycerol-3-phosphate dehydrogenase family.</text>
</comment>
<reference key="1">
    <citation type="journal article" date="2008" name="DNA Res.">
        <title>Complete genome sequence and comparative analysis of the wild-type commensal Escherichia coli strain SE11 isolated from a healthy adult.</title>
        <authorList>
            <person name="Oshima K."/>
            <person name="Toh H."/>
            <person name="Ogura Y."/>
            <person name="Sasamoto H."/>
            <person name="Morita H."/>
            <person name="Park S.-H."/>
            <person name="Ooka T."/>
            <person name="Iyoda S."/>
            <person name="Taylor T.D."/>
            <person name="Hayashi T."/>
            <person name="Itoh K."/>
            <person name="Hattori M."/>
        </authorList>
    </citation>
    <scope>NUCLEOTIDE SEQUENCE [LARGE SCALE GENOMIC DNA]</scope>
    <source>
        <strain>SE11</strain>
    </source>
</reference>
<name>GPDA_ECOSE</name>
<feature type="chain" id="PRO_1000190141" description="Glycerol-3-phosphate dehydrogenase [NAD(P)+]">
    <location>
        <begin position="1"/>
        <end position="339"/>
    </location>
</feature>
<feature type="active site" description="Proton acceptor" evidence="1">
    <location>
        <position position="195"/>
    </location>
</feature>
<feature type="binding site" evidence="1">
    <location>
        <position position="15"/>
    </location>
    <ligand>
        <name>NADPH</name>
        <dbReference type="ChEBI" id="CHEBI:57783"/>
    </ligand>
</feature>
<feature type="binding site" evidence="1">
    <location>
        <position position="16"/>
    </location>
    <ligand>
        <name>NADPH</name>
        <dbReference type="ChEBI" id="CHEBI:57783"/>
    </ligand>
</feature>
<feature type="binding site" evidence="1">
    <location>
        <position position="36"/>
    </location>
    <ligand>
        <name>NADPH</name>
        <dbReference type="ChEBI" id="CHEBI:57783"/>
    </ligand>
</feature>
<feature type="binding site" evidence="1">
    <location>
        <position position="110"/>
    </location>
    <ligand>
        <name>NADPH</name>
        <dbReference type="ChEBI" id="CHEBI:57783"/>
    </ligand>
</feature>
<feature type="binding site" evidence="1">
    <location>
        <position position="110"/>
    </location>
    <ligand>
        <name>sn-glycerol 3-phosphate</name>
        <dbReference type="ChEBI" id="CHEBI:57597"/>
    </ligand>
</feature>
<feature type="binding site" evidence="1">
    <location>
        <position position="139"/>
    </location>
    <ligand>
        <name>sn-glycerol 3-phosphate</name>
        <dbReference type="ChEBI" id="CHEBI:57597"/>
    </ligand>
</feature>
<feature type="binding site" evidence="1">
    <location>
        <position position="141"/>
    </location>
    <ligand>
        <name>sn-glycerol 3-phosphate</name>
        <dbReference type="ChEBI" id="CHEBI:57597"/>
    </ligand>
</feature>
<feature type="binding site" evidence="1">
    <location>
        <position position="143"/>
    </location>
    <ligand>
        <name>NADPH</name>
        <dbReference type="ChEBI" id="CHEBI:57783"/>
    </ligand>
</feature>
<feature type="binding site" evidence="1">
    <location>
        <position position="195"/>
    </location>
    <ligand>
        <name>sn-glycerol 3-phosphate</name>
        <dbReference type="ChEBI" id="CHEBI:57597"/>
    </ligand>
</feature>
<feature type="binding site" evidence="1">
    <location>
        <position position="248"/>
    </location>
    <ligand>
        <name>sn-glycerol 3-phosphate</name>
        <dbReference type="ChEBI" id="CHEBI:57597"/>
    </ligand>
</feature>
<feature type="binding site" evidence="1">
    <location>
        <position position="258"/>
    </location>
    <ligand>
        <name>sn-glycerol 3-phosphate</name>
        <dbReference type="ChEBI" id="CHEBI:57597"/>
    </ligand>
</feature>
<feature type="binding site" evidence="1">
    <location>
        <position position="259"/>
    </location>
    <ligand>
        <name>NADPH</name>
        <dbReference type="ChEBI" id="CHEBI:57783"/>
    </ligand>
</feature>
<feature type="binding site" evidence="1">
    <location>
        <position position="259"/>
    </location>
    <ligand>
        <name>sn-glycerol 3-phosphate</name>
        <dbReference type="ChEBI" id="CHEBI:57597"/>
    </ligand>
</feature>
<feature type="binding site" evidence="1">
    <location>
        <position position="260"/>
    </location>
    <ligand>
        <name>sn-glycerol 3-phosphate</name>
        <dbReference type="ChEBI" id="CHEBI:57597"/>
    </ligand>
</feature>
<feature type="binding site" evidence="1">
    <location>
        <position position="283"/>
    </location>
    <ligand>
        <name>NADPH</name>
        <dbReference type="ChEBI" id="CHEBI:57783"/>
    </ligand>
</feature>
<feature type="binding site" evidence="1">
    <location>
        <position position="285"/>
    </location>
    <ligand>
        <name>NADPH</name>
        <dbReference type="ChEBI" id="CHEBI:57783"/>
    </ligand>
</feature>
<protein>
    <recommendedName>
        <fullName evidence="1">Glycerol-3-phosphate dehydrogenase [NAD(P)+]</fullName>
        <ecNumber evidence="1">1.1.1.94</ecNumber>
    </recommendedName>
    <alternativeName>
        <fullName evidence="1">NAD(P)(+)-dependent glycerol-3-phosphate dehydrogenase</fullName>
    </alternativeName>
    <alternativeName>
        <fullName evidence="1">NAD(P)H-dependent dihydroxyacetone-phosphate reductase</fullName>
    </alternativeName>
</protein>
<evidence type="ECO:0000255" key="1">
    <source>
        <dbReference type="HAMAP-Rule" id="MF_00394"/>
    </source>
</evidence>
<dbReference type="EC" id="1.1.1.94" evidence="1"/>
<dbReference type="EMBL" id="AP009240">
    <property type="protein sequence ID" value="BAG79414.1"/>
    <property type="molecule type" value="Genomic_DNA"/>
</dbReference>
<dbReference type="RefSeq" id="WP_001076194.1">
    <property type="nucleotide sequence ID" value="NC_011415.1"/>
</dbReference>
<dbReference type="SMR" id="B6I3I7"/>
<dbReference type="GeneID" id="93778322"/>
<dbReference type="KEGG" id="ecy:ECSE_3890"/>
<dbReference type="HOGENOM" id="CLU_033449_0_2_6"/>
<dbReference type="UniPathway" id="UPA00940"/>
<dbReference type="Proteomes" id="UP000008199">
    <property type="component" value="Chromosome"/>
</dbReference>
<dbReference type="GO" id="GO:0005829">
    <property type="term" value="C:cytosol"/>
    <property type="evidence" value="ECO:0007669"/>
    <property type="project" value="TreeGrafter"/>
</dbReference>
<dbReference type="GO" id="GO:0047952">
    <property type="term" value="F:glycerol-3-phosphate dehydrogenase [NAD(P)+] activity"/>
    <property type="evidence" value="ECO:0007669"/>
    <property type="project" value="UniProtKB-UniRule"/>
</dbReference>
<dbReference type="GO" id="GO:0051287">
    <property type="term" value="F:NAD binding"/>
    <property type="evidence" value="ECO:0007669"/>
    <property type="project" value="InterPro"/>
</dbReference>
<dbReference type="GO" id="GO:0005975">
    <property type="term" value="P:carbohydrate metabolic process"/>
    <property type="evidence" value="ECO:0007669"/>
    <property type="project" value="InterPro"/>
</dbReference>
<dbReference type="GO" id="GO:0046167">
    <property type="term" value="P:glycerol-3-phosphate biosynthetic process"/>
    <property type="evidence" value="ECO:0007669"/>
    <property type="project" value="UniProtKB-UniRule"/>
</dbReference>
<dbReference type="GO" id="GO:0046168">
    <property type="term" value="P:glycerol-3-phosphate catabolic process"/>
    <property type="evidence" value="ECO:0007669"/>
    <property type="project" value="InterPro"/>
</dbReference>
<dbReference type="GO" id="GO:0046474">
    <property type="term" value="P:glycerophospholipid biosynthetic process"/>
    <property type="evidence" value="ECO:0007669"/>
    <property type="project" value="TreeGrafter"/>
</dbReference>
<dbReference type="FunFam" id="1.10.1040.10:FF:000001">
    <property type="entry name" value="Glycerol-3-phosphate dehydrogenase [NAD(P)+]"/>
    <property type="match status" value="1"/>
</dbReference>
<dbReference type="FunFam" id="3.40.50.720:FF:000019">
    <property type="entry name" value="Glycerol-3-phosphate dehydrogenase [NAD(P)+]"/>
    <property type="match status" value="1"/>
</dbReference>
<dbReference type="Gene3D" id="1.10.1040.10">
    <property type="entry name" value="N-(1-d-carboxylethyl)-l-norvaline Dehydrogenase, domain 2"/>
    <property type="match status" value="1"/>
</dbReference>
<dbReference type="Gene3D" id="3.40.50.720">
    <property type="entry name" value="NAD(P)-binding Rossmann-like Domain"/>
    <property type="match status" value="1"/>
</dbReference>
<dbReference type="HAMAP" id="MF_00394">
    <property type="entry name" value="NAD_Glyc3P_dehydrog"/>
    <property type="match status" value="1"/>
</dbReference>
<dbReference type="InterPro" id="IPR008927">
    <property type="entry name" value="6-PGluconate_DH-like_C_sf"/>
</dbReference>
<dbReference type="InterPro" id="IPR013328">
    <property type="entry name" value="6PGD_dom2"/>
</dbReference>
<dbReference type="InterPro" id="IPR006168">
    <property type="entry name" value="G3P_DH_NAD-dep"/>
</dbReference>
<dbReference type="InterPro" id="IPR006109">
    <property type="entry name" value="G3P_DH_NAD-dep_C"/>
</dbReference>
<dbReference type="InterPro" id="IPR011128">
    <property type="entry name" value="G3P_DH_NAD-dep_N"/>
</dbReference>
<dbReference type="InterPro" id="IPR036291">
    <property type="entry name" value="NAD(P)-bd_dom_sf"/>
</dbReference>
<dbReference type="NCBIfam" id="NF000939">
    <property type="entry name" value="PRK00094.1-1"/>
    <property type="match status" value="1"/>
</dbReference>
<dbReference type="NCBIfam" id="NF000940">
    <property type="entry name" value="PRK00094.1-2"/>
    <property type="match status" value="1"/>
</dbReference>
<dbReference type="NCBIfam" id="NF000942">
    <property type="entry name" value="PRK00094.1-4"/>
    <property type="match status" value="1"/>
</dbReference>
<dbReference type="PANTHER" id="PTHR11728">
    <property type="entry name" value="GLYCEROL-3-PHOSPHATE DEHYDROGENASE"/>
    <property type="match status" value="1"/>
</dbReference>
<dbReference type="PANTHER" id="PTHR11728:SF1">
    <property type="entry name" value="GLYCEROL-3-PHOSPHATE DEHYDROGENASE [NAD(+)] 2, CHLOROPLASTIC"/>
    <property type="match status" value="1"/>
</dbReference>
<dbReference type="Pfam" id="PF07479">
    <property type="entry name" value="NAD_Gly3P_dh_C"/>
    <property type="match status" value="1"/>
</dbReference>
<dbReference type="Pfam" id="PF01210">
    <property type="entry name" value="NAD_Gly3P_dh_N"/>
    <property type="match status" value="1"/>
</dbReference>
<dbReference type="PIRSF" id="PIRSF000114">
    <property type="entry name" value="Glycerol-3-P_dh"/>
    <property type="match status" value="1"/>
</dbReference>
<dbReference type="PRINTS" id="PR00077">
    <property type="entry name" value="GPDHDRGNASE"/>
</dbReference>
<dbReference type="SUPFAM" id="SSF48179">
    <property type="entry name" value="6-phosphogluconate dehydrogenase C-terminal domain-like"/>
    <property type="match status" value="1"/>
</dbReference>
<dbReference type="SUPFAM" id="SSF51735">
    <property type="entry name" value="NAD(P)-binding Rossmann-fold domains"/>
    <property type="match status" value="1"/>
</dbReference>
<dbReference type="PROSITE" id="PS00957">
    <property type="entry name" value="NAD_G3PDH"/>
    <property type="match status" value="1"/>
</dbReference>
<accession>B6I3I7</accession>